<reference key="1">
    <citation type="journal article" date="2007" name="DNA Res.">
        <title>Complete genomic structure of the bloom-forming toxic cyanobacterium Microcystis aeruginosa NIES-843.</title>
        <authorList>
            <person name="Kaneko T."/>
            <person name="Nakajima N."/>
            <person name="Okamoto S."/>
            <person name="Suzuki I."/>
            <person name="Tanabe Y."/>
            <person name="Tamaoki M."/>
            <person name="Nakamura Y."/>
            <person name="Kasai F."/>
            <person name="Watanabe A."/>
            <person name="Kawashima K."/>
            <person name="Kishida Y."/>
            <person name="Ono A."/>
            <person name="Shimizu Y."/>
            <person name="Takahashi C."/>
            <person name="Minami C."/>
            <person name="Fujishiro T."/>
            <person name="Kohara M."/>
            <person name="Katoh M."/>
            <person name="Nakazaki N."/>
            <person name="Nakayama S."/>
            <person name="Yamada M."/>
            <person name="Tabata S."/>
            <person name="Watanabe M.M."/>
        </authorList>
    </citation>
    <scope>NUCLEOTIDE SEQUENCE [LARGE SCALE GENOMIC DNA]</scope>
    <source>
        <strain>NIES-843 / IAM M-247</strain>
    </source>
</reference>
<gene>
    <name evidence="1" type="primary">trpC</name>
    <name type="ordered locus">MAE_45030</name>
</gene>
<accession>B0JTM2</accession>
<protein>
    <recommendedName>
        <fullName evidence="1">Indole-3-glycerol phosphate synthase</fullName>
        <shortName evidence="1">IGPS</shortName>
        <ecNumber evidence="1">4.1.1.48</ecNumber>
    </recommendedName>
</protein>
<sequence length="296" mass="32652">MQIRRKHPNPAVKVESLSYVVKVPEAQPQNILEEIVWHKEIEVDKLRERLPLLELRQKIANTAPPCDFLAALKQGKTQPALIAEVKKASPSKGVILEDFDPVAIARTYEQGGATCLSVLTDSKFFQGSYENLTLVRQAVSLPLLCKEFILYPYQIYYARSKGADAVLLIAAILSDQDLAYFVKIVKGLGMTALVEVHSLAEFDRVLAIEGIELIGINNRNLETFTVDLDNTRQLLEARGEQVREKGILIVSESGLHTATDLAKVKQAGANAVLIGESLVKLPDPALGIQKLFENLG</sequence>
<organism>
    <name type="scientific">Microcystis aeruginosa (strain NIES-843 / IAM M-2473)</name>
    <dbReference type="NCBI Taxonomy" id="449447"/>
    <lineage>
        <taxon>Bacteria</taxon>
        <taxon>Bacillati</taxon>
        <taxon>Cyanobacteriota</taxon>
        <taxon>Cyanophyceae</taxon>
        <taxon>Oscillatoriophycideae</taxon>
        <taxon>Chroococcales</taxon>
        <taxon>Microcystaceae</taxon>
        <taxon>Microcystis</taxon>
    </lineage>
</organism>
<proteinExistence type="inferred from homology"/>
<keyword id="KW-0028">Amino-acid biosynthesis</keyword>
<keyword id="KW-0057">Aromatic amino acid biosynthesis</keyword>
<keyword id="KW-0210">Decarboxylase</keyword>
<keyword id="KW-0456">Lyase</keyword>
<keyword id="KW-0822">Tryptophan biosynthesis</keyword>
<comment type="catalytic activity">
    <reaction evidence="1">
        <text>1-(2-carboxyphenylamino)-1-deoxy-D-ribulose 5-phosphate + H(+) = (1S,2R)-1-C-(indol-3-yl)glycerol 3-phosphate + CO2 + H2O</text>
        <dbReference type="Rhea" id="RHEA:23476"/>
        <dbReference type="ChEBI" id="CHEBI:15377"/>
        <dbReference type="ChEBI" id="CHEBI:15378"/>
        <dbReference type="ChEBI" id="CHEBI:16526"/>
        <dbReference type="ChEBI" id="CHEBI:58613"/>
        <dbReference type="ChEBI" id="CHEBI:58866"/>
        <dbReference type="EC" id="4.1.1.48"/>
    </reaction>
</comment>
<comment type="pathway">
    <text evidence="1">Amino-acid biosynthesis; L-tryptophan biosynthesis; L-tryptophan from chorismate: step 4/5.</text>
</comment>
<comment type="similarity">
    <text evidence="1">Belongs to the TrpC family.</text>
</comment>
<feature type="chain" id="PRO_1000076420" description="Indole-3-glycerol phosphate synthase">
    <location>
        <begin position="1"/>
        <end position="296"/>
    </location>
</feature>
<name>TRPC_MICAN</name>
<evidence type="ECO:0000255" key="1">
    <source>
        <dbReference type="HAMAP-Rule" id="MF_00134"/>
    </source>
</evidence>
<dbReference type="EC" id="4.1.1.48" evidence="1"/>
<dbReference type="EMBL" id="AP009552">
    <property type="protein sequence ID" value="BAG04325.1"/>
    <property type="molecule type" value="Genomic_DNA"/>
</dbReference>
<dbReference type="RefSeq" id="WP_004162667.1">
    <property type="nucleotide sequence ID" value="NC_010296.1"/>
</dbReference>
<dbReference type="SMR" id="B0JTM2"/>
<dbReference type="STRING" id="449447.MAE_45030"/>
<dbReference type="PaxDb" id="449447-MAE_45030"/>
<dbReference type="EnsemblBacteria" id="BAG04325">
    <property type="protein sequence ID" value="BAG04325"/>
    <property type="gene ID" value="MAE_45030"/>
</dbReference>
<dbReference type="KEGG" id="mar:MAE_45030"/>
<dbReference type="eggNOG" id="COG0134">
    <property type="taxonomic scope" value="Bacteria"/>
</dbReference>
<dbReference type="HOGENOM" id="CLU_034247_2_0_3"/>
<dbReference type="BioCyc" id="MAER449447:MAE_RS19515-MONOMER"/>
<dbReference type="UniPathway" id="UPA00035">
    <property type="reaction ID" value="UER00043"/>
</dbReference>
<dbReference type="Proteomes" id="UP000001510">
    <property type="component" value="Chromosome"/>
</dbReference>
<dbReference type="GO" id="GO:0004425">
    <property type="term" value="F:indole-3-glycerol-phosphate synthase activity"/>
    <property type="evidence" value="ECO:0007669"/>
    <property type="project" value="UniProtKB-UniRule"/>
</dbReference>
<dbReference type="GO" id="GO:0004640">
    <property type="term" value="F:phosphoribosylanthranilate isomerase activity"/>
    <property type="evidence" value="ECO:0007669"/>
    <property type="project" value="TreeGrafter"/>
</dbReference>
<dbReference type="GO" id="GO:0000162">
    <property type="term" value="P:L-tryptophan biosynthetic process"/>
    <property type="evidence" value="ECO:0007669"/>
    <property type="project" value="UniProtKB-UniRule"/>
</dbReference>
<dbReference type="CDD" id="cd00331">
    <property type="entry name" value="IGPS"/>
    <property type="match status" value="1"/>
</dbReference>
<dbReference type="FunFam" id="3.20.20.70:FF:000024">
    <property type="entry name" value="Indole-3-glycerol phosphate synthase"/>
    <property type="match status" value="1"/>
</dbReference>
<dbReference type="Gene3D" id="3.20.20.70">
    <property type="entry name" value="Aldolase class I"/>
    <property type="match status" value="1"/>
</dbReference>
<dbReference type="HAMAP" id="MF_00134_B">
    <property type="entry name" value="IGPS_B"/>
    <property type="match status" value="1"/>
</dbReference>
<dbReference type="InterPro" id="IPR013785">
    <property type="entry name" value="Aldolase_TIM"/>
</dbReference>
<dbReference type="InterPro" id="IPR045186">
    <property type="entry name" value="Indole-3-glycerol_P_synth"/>
</dbReference>
<dbReference type="InterPro" id="IPR013798">
    <property type="entry name" value="Indole-3-glycerol_P_synth_dom"/>
</dbReference>
<dbReference type="InterPro" id="IPR001468">
    <property type="entry name" value="Indole-3-GlycerolPSynthase_CS"/>
</dbReference>
<dbReference type="InterPro" id="IPR011060">
    <property type="entry name" value="RibuloseP-bd_barrel"/>
</dbReference>
<dbReference type="NCBIfam" id="NF001372">
    <property type="entry name" value="PRK00278.1-4"/>
    <property type="match status" value="1"/>
</dbReference>
<dbReference type="NCBIfam" id="NF001377">
    <property type="entry name" value="PRK00278.2-4"/>
    <property type="match status" value="1"/>
</dbReference>
<dbReference type="PANTHER" id="PTHR22854:SF2">
    <property type="entry name" value="INDOLE-3-GLYCEROL-PHOSPHATE SYNTHASE"/>
    <property type="match status" value="1"/>
</dbReference>
<dbReference type="PANTHER" id="PTHR22854">
    <property type="entry name" value="TRYPTOPHAN BIOSYNTHESIS PROTEIN"/>
    <property type="match status" value="1"/>
</dbReference>
<dbReference type="Pfam" id="PF00218">
    <property type="entry name" value="IGPS"/>
    <property type="match status" value="1"/>
</dbReference>
<dbReference type="SUPFAM" id="SSF51366">
    <property type="entry name" value="Ribulose-phoshate binding barrel"/>
    <property type="match status" value="1"/>
</dbReference>
<dbReference type="PROSITE" id="PS00614">
    <property type="entry name" value="IGPS"/>
    <property type="match status" value="1"/>
</dbReference>